<name>CTPAL_STAAN</name>
<gene>
    <name type="ordered locus">SA1253</name>
</gene>
<feature type="chain" id="PRO_0000233191" description="Probable CtpA-like serine protease">
    <location>
        <begin position="1"/>
        <end position="496"/>
    </location>
</feature>
<feature type="transmembrane region" description="Helical" evidence="2">
    <location>
        <begin position="39"/>
        <end position="59"/>
    </location>
</feature>
<feature type="domain" description="PDZ" evidence="3">
    <location>
        <begin position="124"/>
        <end position="206"/>
    </location>
</feature>
<feature type="region of interest" description="Disordered" evidence="4">
    <location>
        <begin position="1"/>
        <end position="27"/>
    </location>
</feature>
<feature type="compositionally biased region" description="Basic and acidic residues" evidence="4">
    <location>
        <begin position="1"/>
        <end position="16"/>
    </location>
</feature>
<feature type="compositionally biased region" description="Polar residues" evidence="4">
    <location>
        <begin position="18"/>
        <end position="27"/>
    </location>
</feature>
<feature type="active site" description="Charge relay system" evidence="1">
    <location>
        <position position="329"/>
    </location>
</feature>
<feature type="active site" description="Charge relay system" evidence="1">
    <location>
        <position position="340"/>
    </location>
</feature>
<feature type="active site" description="Charge relay system" evidence="1">
    <location>
        <position position="354"/>
    </location>
</feature>
<reference key="1">
    <citation type="journal article" date="2001" name="Lancet">
        <title>Whole genome sequencing of meticillin-resistant Staphylococcus aureus.</title>
        <authorList>
            <person name="Kuroda M."/>
            <person name="Ohta T."/>
            <person name="Uchiyama I."/>
            <person name="Baba T."/>
            <person name="Yuzawa H."/>
            <person name="Kobayashi I."/>
            <person name="Cui L."/>
            <person name="Oguchi A."/>
            <person name="Aoki K."/>
            <person name="Nagai Y."/>
            <person name="Lian J.-Q."/>
            <person name="Ito T."/>
            <person name="Kanamori M."/>
            <person name="Matsumaru H."/>
            <person name="Maruyama A."/>
            <person name="Murakami H."/>
            <person name="Hosoyama A."/>
            <person name="Mizutani-Ui Y."/>
            <person name="Takahashi N.K."/>
            <person name="Sawano T."/>
            <person name="Inoue R."/>
            <person name="Kaito C."/>
            <person name="Sekimizu K."/>
            <person name="Hirakawa H."/>
            <person name="Kuhara S."/>
            <person name="Goto S."/>
            <person name="Yabuzaki J."/>
            <person name="Kanehisa M."/>
            <person name="Yamashita A."/>
            <person name="Oshima K."/>
            <person name="Furuya K."/>
            <person name="Yoshino C."/>
            <person name="Shiba T."/>
            <person name="Hattori M."/>
            <person name="Ogasawara N."/>
            <person name="Hayashi H."/>
            <person name="Hiramatsu K."/>
        </authorList>
    </citation>
    <scope>NUCLEOTIDE SEQUENCE [LARGE SCALE GENOMIC DNA]</scope>
    <source>
        <strain>N315</strain>
    </source>
</reference>
<reference key="2">
    <citation type="submission" date="2007-10" db="UniProtKB">
        <title>Shotgun proteomic analysis of total and membrane protein extracts of S. aureus strain N315.</title>
        <authorList>
            <person name="Vaezzadeh A.R."/>
            <person name="Deshusses J."/>
            <person name="Lescuyer P."/>
            <person name="Hochstrasser D.F."/>
        </authorList>
    </citation>
    <scope>IDENTIFICATION BY MASS SPECTROMETRY [LARGE SCALE ANALYSIS]</scope>
    <source>
        <strain>N315</strain>
    </source>
</reference>
<comment type="subcellular location">
    <subcellularLocation>
        <location evidence="5">Cell membrane</location>
        <topology evidence="5">Single-pass membrane protein</topology>
    </subcellularLocation>
</comment>
<comment type="similarity">
    <text evidence="5">Belongs to the peptidase S41A family.</text>
</comment>
<keyword id="KW-1003">Cell membrane</keyword>
<keyword id="KW-0378">Hydrolase</keyword>
<keyword id="KW-0472">Membrane</keyword>
<keyword id="KW-0645">Protease</keyword>
<keyword id="KW-0720">Serine protease</keyword>
<keyword id="KW-0812">Transmembrane</keyword>
<keyword id="KW-1133">Transmembrane helix</keyword>
<protein>
    <recommendedName>
        <fullName>Probable CtpA-like serine protease</fullName>
        <ecNumber>3.4.21.-</ecNumber>
    </recommendedName>
</protein>
<accession>Q7A5M9</accession>
<organism>
    <name type="scientific">Staphylococcus aureus (strain N315)</name>
    <dbReference type="NCBI Taxonomy" id="158879"/>
    <lineage>
        <taxon>Bacteria</taxon>
        <taxon>Bacillati</taxon>
        <taxon>Bacillota</taxon>
        <taxon>Bacilli</taxon>
        <taxon>Bacillales</taxon>
        <taxon>Staphylococcaceae</taxon>
        <taxon>Staphylococcus</taxon>
    </lineage>
</organism>
<proteinExistence type="evidence at protein level"/>
<dbReference type="EC" id="3.4.21.-"/>
<dbReference type="EMBL" id="BA000018">
    <property type="protein sequence ID" value="BAB42513.1"/>
    <property type="molecule type" value="Genomic_DNA"/>
</dbReference>
<dbReference type="PIR" id="D89919">
    <property type="entry name" value="D89919"/>
</dbReference>
<dbReference type="RefSeq" id="WP_000342131.1">
    <property type="nucleotide sequence ID" value="NC_002745.2"/>
</dbReference>
<dbReference type="SMR" id="Q7A5M9"/>
<dbReference type="EnsemblBacteria" id="BAB42513">
    <property type="protein sequence ID" value="BAB42513"/>
    <property type="gene ID" value="BAB42513"/>
</dbReference>
<dbReference type="KEGG" id="sau:SA1253"/>
<dbReference type="HOGENOM" id="CLU_017295_3_0_9"/>
<dbReference type="GO" id="GO:0030288">
    <property type="term" value="C:outer membrane-bounded periplasmic space"/>
    <property type="evidence" value="ECO:0007669"/>
    <property type="project" value="TreeGrafter"/>
</dbReference>
<dbReference type="GO" id="GO:0005886">
    <property type="term" value="C:plasma membrane"/>
    <property type="evidence" value="ECO:0007669"/>
    <property type="project" value="UniProtKB-SubCell"/>
</dbReference>
<dbReference type="GO" id="GO:0004175">
    <property type="term" value="F:endopeptidase activity"/>
    <property type="evidence" value="ECO:0007669"/>
    <property type="project" value="TreeGrafter"/>
</dbReference>
<dbReference type="GO" id="GO:0008236">
    <property type="term" value="F:serine-type peptidase activity"/>
    <property type="evidence" value="ECO:0007669"/>
    <property type="project" value="UniProtKB-KW"/>
</dbReference>
<dbReference type="GO" id="GO:0006508">
    <property type="term" value="P:proteolysis"/>
    <property type="evidence" value="ECO:0007669"/>
    <property type="project" value="UniProtKB-KW"/>
</dbReference>
<dbReference type="GO" id="GO:0007165">
    <property type="term" value="P:signal transduction"/>
    <property type="evidence" value="ECO:0007669"/>
    <property type="project" value="TreeGrafter"/>
</dbReference>
<dbReference type="CDD" id="cd06782">
    <property type="entry name" value="cpPDZ_CPP-like"/>
    <property type="match status" value="1"/>
</dbReference>
<dbReference type="CDD" id="cd07560">
    <property type="entry name" value="Peptidase_S41_CPP"/>
    <property type="match status" value="1"/>
</dbReference>
<dbReference type="FunFam" id="2.30.42.10:FF:000063">
    <property type="entry name" value="Peptidase, S41 family"/>
    <property type="match status" value="1"/>
</dbReference>
<dbReference type="FunFam" id="3.30.750.44:FF:000001">
    <property type="entry name" value="S41 family peptidase"/>
    <property type="match status" value="1"/>
</dbReference>
<dbReference type="Gene3D" id="2.30.42.10">
    <property type="match status" value="1"/>
</dbReference>
<dbReference type="Gene3D" id="3.30.750.44">
    <property type="match status" value="1"/>
</dbReference>
<dbReference type="Gene3D" id="3.90.226.10">
    <property type="entry name" value="2-enoyl-CoA Hydratase, Chain A, domain 1"/>
    <property type="match status" value="1"/>
</dbReference>
<dbReference type="Gene3D" id="1.10.101.10">
    <property type="entry name" value="PGBD-like superfamily/PGBD"/>
    <property type="match status" value="1"/>
</dbReference>
<dbReference type="InterPro" id="IPR029045">
    <property type="entry name" value="ClpP/crotonase-like_dom_sf"/>
</dbReference>
<dbReference type="InterPro" id="IPR055210">
    <property type="entry name" value="CtpA/B_N"/>
</dbReference>
<dbReference type="InterPro" id="IPR001478">
    <property type="entry name" value="PDZ"/>
</dbReference>
<dbReference type="InterPro" id="IPR041489">
    <property type="entry name" value="PDZ_6"/>
</dbReference>
<dbReference type="InterPro" id="IPR036034">
    <property type="entry name" value="PDZ_sf"/>
</dbReference>
<dbReference type="InterPro" id="IPR004447">
    <property type="entry name" value="Peptidase_S41A"/>
</dbReference>
<dbReference type="InterPro" id="IPR002477">
    <property type="entry name" value="Peptidoglycan-bd-like"/>
</dbReference>
<dbReference type="InterPro" id="IPR036365">
    <property type="entry name" value="PGBD-like_sf"/>
</dbReference>
<dbReference type="InterPro" id="IPR036366">
    <property type="entry name" value="PGBDSf"/>
</dbReference>
<dbReference type="InterPro" id="IPR005151">
    <property type="entry name" value="Tail-specific_protease"/>
</dbReference>
<dbReference type="NCBIfam" id="TIGR00225">
    <property type="entry name" value="prc"/>
    <property type="match status" value="1"/>
</dbReference>
<dbReference type="PANTHER" id="PTHR32060:SF30">
    <property type="entry name" value="CARBOXY-TERMINAL PROCESSING PROTEASE CTPA"/>
    <property type="match status" value="1"/>
</dbReference>
<dbReference type="PANTHER" id="PTHR32060">
    <property type="entry name" value="TAIL-SPECIFIC PROTEASE"/>
    <property type="match status" value="1"/>
</dbReference>
<dbReference type="Pfam" id="PF22694">
    <property type="entry name" value="CtpB_N-like"/>
    <property type="match status" value="1"/>
</dbReference>
<dbReference type="Pfam" id="PF17820">
    <property type="entry name" value="PDZ_6"/>
    <property type="match status" value="1"/>
</dbReference>
<dbReference type="Pfam" id="PF03572">
    <property type="entry name" value="Peptidase_S41"/>
    <property type="match status" value="1"/>
</dbReference>
<dbReference type="Pfam" id="PF01471">
    <property type="entry name" value="PG_binding_1"/>
    <property type="match status" value="1"/>
</dbReference>
<dbReference type="SMART" id="SM00228">
    <property type="entry name" value="PDZ"/>
    <property type="match status" value="1"/>
</dbReference>
<dbReference type="SMART" id="SM00245">
    <property type="entry name" value="TSPc"/>
    <property type="match status" value="1"/>
</dbReference>
<dbReference type="SUPFAM" id="SSF52096">
    <property type="entry name" value="ClpP/crotonase"/>
    <property type="match status" value="1"/>
</dbReference>
<dbReference type="SUPFAM" id="SSF50156">
    <property type="entry name" value="PDZ domain-like"/>
    <property type="match status" value="1"/>
</dbReference>
<dbReference type="SUPFAM" id="SSF47090">
    <property type="entry name" value="PGBD-like"/>
    <property type="match status" value="1"/>
</dbReference>
<dbReference type="PROSITE" id="PS50106">
    <property type="entry name" value="PDZ"/>
    <property type="match status" value="1"/>
</dbReference>
<sequence>MDDKQHTSSSDDERAEIATSNQDQETNSSKRVHLKRWQFISILIGTTLITAVITVVAYIFINQKISGLNKTDQANLNKIENVYKILNSDYYKKQDSDKLSKAAIDGMVKELKDPYSEYLTKEQTKSFNEGVSGDFVGIGAEMQKKNDQIMVTSPMKGSPAERAGIRPKDVITKVNGKSIKGKALDEVVKDVRGKENTEVTLTVQRGSEEKDVKIKREKIHVKSVDYKKKGKVGVITINKFQNDTSGELKDAVLKAHKDGLKKIVLDLRNNPGGLLDEAVKMANIFIDKGKTVVKLEKGKDTEAIQTSNDSLKEAKDMDISILVNEGSASASEVFTGALKDYNKAKVYGSKTFGKGVVQTTREFKDGSLLKYTEMKWLTPDGHYIHGKGIKPDVTIDTPKYQSLNVIPNTKTFKVGDDDKNIKTIKIGLSALGYKVDNESTQFDQALENQVKAFQQANKLEVTGEFNKETNNKFTELLVEKANKHDDVLDKLINILK</sequence>
<evidence type="ECO:0000250" key="1"/>
<evidence type="ECO:0000255" key="2"/>
<evidence type="ECO:0000255" key="3">
    <source>
        <dbReference type="PROSITE-ProRule" id="PRU00143"/>
    </source>
</evidence>
<evidence type="ECO:0000256" key="4">
    <source>
        <dbReference type="SAM" id="MobiDB-lite"/>
    </source>
</evidence>
<evidence type="ECO:0000305" key="5"/>